<evidence type="ECO:0000255" key="1">
    <source>
        <dbReference type="PROSITE-ProRule" id="PRU00395"/>
    </source>
</evidence>
<evidence type="ECO:0000269" key="2">
    <source>
    </source>
</evidence>
<evidence type="ECO:0000303" key="3">
    <source>
    </source>
</evidence>
<evidence type="ECO:0000305" key="4"/>
<reference evidence="4" key="1">
    <citation type="journal article" date="2016" name="FEBS J.">
        <title>Immunostimulating and Gram-negative-specific antibacterial cyclotides from the butterfly pea Clitoria ternatea.</title>
        <authorList>
            <person name="Nguyen K.N."/>
            <person name="Nguyen G.K."/>
            <person name="Nguyen P.Q."/>
            <person name="Ang K.H."/>
            <person name="Dedon P.C."/>
            <person name="Tam J.P."/>
        </authorList>
    </citation>
    <scope>PROTEIN SEQUENCE</scope>
    <scope>FUNCTION</scope>
    <scope>TISSUE SPECIFICITY</scope>
    <scope>CYCLIZATION</scope>
    <scope>PRESENCE OF DISULFIDE BONDS</scope>
    <scope>MASS SPECTROMETRY</scope>
    <scope>IDENTIFICATION BY MASS SPECTROMETRY</scope>
</reference>
<accession>C0HJS1</accession>
<name>CYC14_CLITE</name>
<comment type="function">
    <text evidence="1 2">Probably participates in a plant defense mechanism. Not active against Gram-negative bacterium E.coli ATCC 700926 or Gram-positive bacterium S.aureus ATCC 12600 up to a concentration of 100 uM under low-salt conditions (PubMed:27007913).</text>
</comment>
<comment type="tissue specificity">
    <text evidence="2">Expressed in seed but not in root nodules.</text>
</comment>
<comment type="domain">
    <text evidence="4">The presence of a 'disulfide through disulfide knot' structurally defines this protein as a knottin.</text>
</comment>
<comment type="PTM">
    <text evidence="2">Contains 3 disulfide bonds.</text>
</comment>
<comment type="PTM">
    <text evidence="1 2">This is a cyclic peptide.</text>
</comment>
<comment type="mass spectrometry" mass="3348.427" method="MALDI" evidence="2"/>
<comment type="similarity">
    <text evidence="1">Belongs to the cyclotide family. Bracelet subfamily.</text>
</comment>
<sequence length="31" mass="3375">DTIPCGESCVWIPCISSILGCSCKDKVCYHN</sequence>
<keyword id="KW-0903">Direct protein sequencing</keyword>
<keyword id="KW-1015">Disulfide bond</keyword>
<keyword id="KW-0960">Knottin</keyword>
<keyword id="KW-0611">Plant defense</keyword>
<dbReference type="SMR" id="C0HJS1"/>
<dbReference type="GO" id="GO:0006952">
    <property type="term" value="P:defense response"/>
    <property type="evidence" value="ECO:0007669"/>
    <property type="project" value="UniProtKB-KW"/>
</dbReference>
<dbReference type="InterPro" id="IPR005535">
    <property type="entry name" value="Cyclotide"/>
</dbReference>
<dbReference type="InterPro" id="IPR012323">
    <property type="entry name" value="Cyclotide_bracelet_CS"/>
</dbReference>
<dbReference type="InterPro" id="IPR036146">
    <property type="entry name" value="Cyclotide_sf"/>
</dbReference>
<dbReference type="Pfam" id="PF03784">
    <property type="entry name" value="Cyclotide"/>
    <property type="match status" value="1"/>
</dbReference>
<dbReference type="PIRSF" id="PIRSF037891">
    <property type="entry name" value="Cycloviolacin"/>
    <property type="match status" value="1"/>
</dbReference>
<dbReference type="SUPFAM" id="SSF57038">
    <property type="entry name" value="Cyclotides"/>
    <property type="match status" value="1"/>
</dbReference>
<dbReference type="PROSITE" id="PS51052">
    <property type="entry name" value="CYCLOTIDE"/>
    <property type="match status" value="1"/>
</dbReference>
<dbReference type="PROSITE" id="PS60008">
    <property type="entry name" value="CYCLOTIDE_BRACELET"/>
    <property type="match status" value="1"/>
</dbReference>
<proteinExistence type="evidence at protein level"/>
<organism evidence="3">
    <name type="scientific">Clitoria ternatea</name>
    <name type="common">Butterfly pea</name>
    <dbReference type="NCBI Taxonomy" id="43366"/>
    <lineage>
        <taxon>Eukaryota</taxon>
        <taxon>Viridiplantae</taxon>
        <taxon>Streptophyta</taxon>
        <taxon>Embryophyta</taxon>
        <taxon>Tracheophyta</taxon>
        <taxon>Spermatophyta</taxon>
        <taxon>Magnoliopsida</taxon>
        <taxon>eudicotyledons</taxon>
        <taxon>Gunneridae</taxon>
        <taxon>Pentapetalae</taxon>
        <taxon>rosids</taxon>
        <taxon>fabids</taxon>
        <taxon>Fabales</taxon>
        <taxon>Fabaceae</taxon>
        <taxon>Papilionoideae</taxon>
        <taxon>50 kb inversion clade</taxon>
        <taxon>NPAAA clade</taxon>
        <taxon>indigoferoid/millettioid clade</taxon>
        <taxon>Phaseoleae</taxon>
        <taxon>Clitoria</taxon>
    </lineage>
</organism>
<protein>
    <recommendedName>
        <fullName evidence="3">Cliotide T14</fullName>
    </recommendedName>
    <alternativeName>
        <fullName evidence="3">Cyclotide cT14</fullName>
    </alternativeName>
</protein>
<feature type="peptide" id="PRO_0000436312" description="Cliotide T14" evidence="2">
    <location>
        <begin position="1"/>
        <end position="31"/>
    </location>
</feature>
<feature type="disulfide bond" evidence="1">
    <location>
        <begin position="5"/>
        <end position="21"/>
    </location>
</feature>
<feature type="disulfide bond" evidence="1">
    <location>
        <begin position="9"/>
        <end position="23"/>
    </location>
</feature>
<feature type="disulfide bond" evidence="1">
    <location>
        <begin position="14"/>
        <end position="28"/>
    </location>
</feature>
<feature type="cross-link" description="Cyclopeptide (Asp-Asn)" evidence="2">
    <location>
        <begin position="1"/>
        <end position="31"/>
    </location>
</feature>